<reference key="1">
    <citation type="journal article" date="1999" name="J. Reprod. Fertil.">
        <title>Production of interferon by the conceptus in red deer Cervus elaphus.</title>
        <authorList>
            <person name="Demmers K.J."/>
            <person name="Kaluz S."/>
            <person name="Deakin D.W."/>
            <person name="Jabbour H.N."/>
            <person name="Flint A.P.F."/>
        </authorList>
    </citation>
    <scope>NUCLEOTIDE SEQUENCE [MRNA]</scope>
</reference>
<reference key="2">
    <citation type="journal article" date="1998" name="Biochimie">
        <title>IFN-tau: a novel subtype I IFN1. Structural characteristics, non-ubiquitous expression, structure-function relationships, a pregnancy hormonal embryonic signal and cross-species therapeutic potentialities.</title>
        <authorList>
            <person name="Martal J.L."/>
            <person name="Chene N.M."/>
            <person name="Huynh L.P."/>
            <person name="L'Haridon R.M."/>
            <person name="Reinaud P.B."/>
            <person name="Guillomot M.W."/>
            <person name="Charlier M.A."/>
            <person name="Charpigny S.Y."/>
        </authorList>
    </citation>
    <scope>REVIEW</scope>
</reference>
<gene>
    <name type="primary">IFNT</name>
</gene>
<comment type="function">
    <text>Paracrine hormone primarily responsible for maternal recognition of pregnancy. Interacts with endometrial receptors, probably type I interferon receptors, and blocks estrogen receptor expression, preventing the estrogen-induced increase in oxytocin receptor expression in the endometrium. This results in the suppression of the pulsatile endometrial release of the luteolytic hormone prostaglandin F2-alpha, hindering the regression of the corpus luteum (luteolysis) and therefore a return to ovarian cyclicity. This, and a possible direct effect of IFN-tau on prostaglandin synthesis, leads in turn to continued ovarian progesterone secretion, which stimulates the secretion by the endometrium of the nutrients required for the growth of the conceptus. In summary, displays particularly high antiviral and antiproliferative potency concurrently with particular weak cytotoxicity, high antiluteolytic activity and immunomodulatory properties. In contrast with other IFNs, IFN-tau is not virally inducible.</text>
</comment>
<comment type="subcellular location">
    <subcellularLocation>
        <location>Secreted</location>
    </subcellularLocation>
    <text>Secreted into the uterine lumen.</text>
</comment>
<comment type="tissue specificity">
    <text>Constitutively and exclusively expressed in the mononuclear cells of the extraembryonic trophectoderm.</text>
</comment>
<comment type="developmental stage">
    <text>Major secretory product synthesized by the conceptus during a very short period in early pregnancy.</text>
</comment>
<comment type="miscellaneous">
    <text>IFN-tau genes are intronless. They evolved from IFN-omega genes in the ruminantia suborder and have continued to duplicate independently in different lineages of the ruminantia. They code for proteins very similar in sequence but with different biological potency and pattern of expression.</text>
</comment>
<comment type="similarity">
    <text evidence="2">Belongs to the alpha/beta interferon family. IFN-alphaII subfamily.</text>
</comment>
<dbReference type="EMBL" id="AJ000638">
    <property type="protein sequence ID" value="CAA04193.1"/>
    <property type="molecule type" value="mRNA"/>
</dbReference>
<dbReference type="SMR" id="O46633"/>
<dbReference type="GO" id="GO:0005615">
    <property type="term" value="C:extracellular space"/>
    <property type="evidence" value="ECO:0007669"/>
    <property type="project" value="UniProtKB-KW"/>
</dbReference>
<dbReference type="GO" id="GO:0005125">
    <property type="term" value="F:cytokine activity"/>
    <property type="evidence" value="ECO:0007669"/>
    <property type="project" value="UniProtKB-KW"/>
</dbReference>
<dbReference type="GO" id="GO:0005126">
    <property type="term" value="F:cytokine receptor binding"/>
    <property type="evidence" value="ECO:0007669"/>
    <property type="project" value="InterPro"/>
</dbReference>
<dbReference type="GO" id="GO:0005179">
    <property type="term" value="F:hormone activity"/>
    <property type="evidence" value="ECO:0007669"/>
    <property type="project" value="UniProtKB-KW"/>
</dbReference>
<dbReference type="GO" id="GO:0051607">
    <property type="term" value="P:defense response to virus"/>
    <property type="evidence" value="ECO:0007669"/>
    <property type="project" value="UniProtKB-KW"/>
</dbReference>
<dbReference type="GO" id="GO:0007565">
    <property type="term" value="P:female pregnancy"/>
    <property type="evidence" value="ECO:0007669"/>
    <property type="project" value="UniProtKB-KW"/>
</dbReference>
<dbReference type="CDD" id="cd00095">
    <property type="entry name" value="IFab"/>
    <property type="match status" value="1"/>
</dbReference>
<dbReference type="FunFam" id="1.20.1250.10:FF:000001">
    <property type="entry name" value="Interferon alpha"/>
    <property type="match status" value="1"/>
</dbReference>
<dbReference type="Gene3D" id="1.20.1250.10">
    <property type="match status" value="1"/>
</dbReference>
<dbReference type="InterPro" id="IPR009079">
    <property type="entry name" value="4_helix_cytokine-like_core"/>
</dbReference>
<dbReference type="InterPro" id="IPR000471">
    <property type="entry name" value="Interferon_alpha/beta/delta"/>
</dbReference>
<dbReference type="PANTHER" id="PTHR11691:SF37">
    <property type="entry name" value="INTERFERON OMEGA-1"/>
    <property type="match status" value="1"/>
</dbReference>
<dbReference type="PANTHER" id="PTHR11691">
    <property type="entry name" value="TYPE I INTERFERON"/>
    <property type="match status" value="1"/>
</dbReference>
<dbReference type="Pfam" id="PF00143">
    <property type="entry name" value="Interferon"/>
    <property type="match status" value="1"/>
</dbReference>
<dbReference type="PRINTS" id="PR00266">
    <property type="entry name" value="INTERFERONAB"/>
</dbReference>
<dbReference type="SMART" id="SM00076">
    <property type="entry name" value="IFabd"/>
    <property type="match status" value="1"/>
</dbReference>
<dbReference type="SUPFAM" id="SSF47266">
    <property type="entry name" value="4-helical cytokines"/>
    <property type="match status" value="1"/>
</dbReference>
<dbReference type="PROSITE" id="PS00252">
    <property type="entry name" value="INTERFERON_A_B_D"/>
    <property type="match status" value="1"/>
</dbReference>
<sequence length="195" mass="22076">MAFVLSLLMALVLASYSPGGSLGCDLSQNHVLLGRQNLKLLGQMTRLSPRFCLQDRKDFGLPQEMVEGGQLQKDQAISVLHEMLQQCFNLFHTERSSAAWDTTLLEQLRTGLHQQLDDLDACLGQVMGKEDSDLRRMGPTLTVKKYFQGIHVYLQEKEYSDCAWEIVQVEMMRALSSISRLQKRLRKMGGDLNSP</sequence>
<name>IFNT_CEREL</name>
<organism>
    <name type="scientific">Cervus elaphus</name>
    <name type="common">Red deer</name>
    <dbReference type="NCBI Taxonomy" id="9860"/>
    <lineage>
        <taxon>Eukaryota</taxon>
        <taxon>Metazoa</taxon>
        <taxon>Chordata</taxon>
        <taxon>Craniata</taxon>
        <taxon>Vertebrata</taxon>
        <taxon>Euteleostomi</taxon>
        <taxon>Mammalia</taxon>
        <taxon>Eutheria</taxon>
        <taxon>Laurasiatheria</taxon>
        <taxon>Artiodactyla</taxon>
        <taxon>Ruminantia</taxon>
        <taxon>Pecora</taxon>
        <taxon>Cervidae</taxon>
        <taxon>Cervinae</taxon>
        <taxon>Cervus</taxon>
    </lineage>
</organism>
<protein>
    <recommendedName>
        <fullName>Interferon tau</fullName>
        <shortName>IFN-tau</shortName>
    </recommendedName>
    <alternativeName>
        <fullName>Antiluteolysin</fullName>
    </alternativeName>
    <alternativeName>
        <fullName>Trophoblast antiluteolytic protein</fullName>
    </alternativeName>
    <alternativeName>
        <fullName>Trophoblast protein 1</fullName>
        <shortName>TP-1</shortName>
    </alternativeName>
    <alternativeName>
        <fullName>Trophoblastin</fullName>
    </alternativeName>
</protein>
<accession>O46633</accession>
<proteinExistence type="evidence at transcript level"/>
<feature type="signal peptide" evidence="1">
    <location>
        <begin position="1"/>
        <end position="23"/>
    </location>
</feature>
<feature type="chain" id="PRO_0000016424" description="Interferon tau">
    <location>
        <begin position="24"/>
        <end position="195"/>
    </location>
</feature>
<feature type="disulfide bond" evidence="1">
    <location>
        <begin position="24"/>
        <end position="122"/>
    </location>
</feature>
<feature type="disulfide bond" evidence="1">
    <location>
        <begin position="52"/>
        <end position="162"/>
    </location>
</feature>
<keyword id="KW-0051">Antiviral defense</keyword>
<keyword id="KW-0202">Cytokine</keyword>
<keyword id="KW-1015">Disulfide bond</keyword>
<keyword id="KW-0372">Hormone</keyword>
<keyword id="KW-0635">Pregnancy</keyword>
<keyword id="KW-0964">Secreted</keyword>
<keyword id="KW-0732">Signal</keyword>
<evidence type="ECO:0000250" key="1"/>
<evidence type="ECO:0000305" key="2"/>